<gene>
    <name evidence="1" type="primary">napA</name>
    <name type="ordered locus">VS_II0598</name>
</gene>
<organism>
    <name type="scientific">Vibrio atlanticus (strain LGP32)</name>
    <name type="common">Vibrio splendidus (strain Mel32)</name>
    <dbReference type="NCBI Taxonomy" id="575788"/>
    <lineage>
        <taxon>Bacteria</taxon>
        <taxon>Pseudomonadati</taxon>
        <taxon>Pseudomonadota</taxon>
        <taxon>Gammaproteobacteria</taxon>
        <taxon>Vibrionales</taxon>
        <taxon>Vibrionaceae</taxon>
        <taxon>Vibrio</taxon>
    </lineage>
</organism>
<proteinExistence type="inferred from homology"/>
<name>NAPA_VIBA3</name>
<feature type="signal peptide" description="Tat-type signal" evidence="1">
    <location>
        <begin position="1"/>
        <end position="29"/>
    </location>
</feature>
<feature type="chain" id="PRO_1000186379" description="Periplasmic nitrate reductase" evidence="1">
    <location>
        <begin position="30"/>
        <end position="829"/>
    </location>
</feature>
<feature type="domain" description="4Fe-4S Mo/W bis-MGD-type" evidence="1">
    <location>
        <begin position="41"/>
        <end position="97"/>
    </location>
</feature>
<feature type="binding site" evidence="1">
    <location>
        <position position="48"/>
    </location>
    <ligand>
        <name>[4Fe-4S] cluster</name>
        <dbReference type="ChEBI" id="CHEBI:49883"/>
    </ligand>
</feature>
<feature type="binding site" evidence="1">
    <location>
        <position position="51"/>
    </location>
    <ligand>
        <name>[4Fe-4S] cluster</name>
        <dbReference type="ChEBI" id="CHEBI:49883"/>
    </ligand>
</feature>
<feature type="binding site" evidence="1">
    <location>
        <position position="55"/>
    </location>
    <ligand>
        <name>[4Fe-4S] cluster</name>
        <dbReference type="ChEBI" id="CHEBI:49883"/>
    </ligand>
</feature>
<feature type="binding site" evidence="1">
    <location>
        <position position="83"/>
    </location>
    <ligand>
        <name>[4Fe-4S] cluster</name>
        <dbReference type="ChEBI" id="CHEBI:49883"/>
    </ligand>
</feature>
<feature type="binding site" evidence="1">
    <location>
        <position position="85"/>
    </location>
    <ligand>
        <name>Mo-bis(molybdopterin guanine dinucleotide)</name>
        <dbReference type="ChEBI" id="CHEBI:60539"/>
    </ligand>
</feature>
<feature type="binding site" evidence="1">
    <location>
        <position position="152"/>
    </location>
    <ligand>
        <name>Mo-bis(molybdopterin guanine dinucleotide)</name>
        <dbReference type="ChEBI" id="CHEBI:60539"/>
    </ligand>
</feature>
<feature type="binding site" evidence="1">
    <location>
        <position position="177"/>
    </location>
    <ligand>
        <name>Mo-bis(molybdopterin guanine dinucleotide)</name>
        <dbReference type="ChEBI" id="CHEBI:60539"/>
    </ligand>
</feature>
<feature type="binding site" evidence="1">
    <location>
        <position position="181"/>
    </location>
    <ligand>
        <name>Mo-bis(molybdopterin guanine dinucleotide)</name>
        <dbReference type="ChEBI" id="CHEBI:60539"/>
    </ligand>
</feature>
<feature type="binding site" evidence="1">
    <location>
        <begin position="214"/>
        <end position="221"/>
    </location>
    <ligand>
        <name>Mo-bis(molybdopterin guanine dinucleotide)</name>
        <dbReference type="ChEBI" id="CHEBI:60539"/>
    </ligand>
</feature>
<feature type="binding site" evidence="1">
    <location>
        <begin position="245"/>
        <end position="249"/>
    </location>
    <ligand>
        <name>Mo-bis(molybdopterin guanine dinucleotide)</name>
        <dbReference type="ChEBI" id="CHEBI:60539"/>
    </ligand>
</feature>
<feature type="binding site" evidence="1">
    <location>
        <begin position="264"/>
        <end position="266"/>
    </location>
    <ligand>
        <name>Mo-bis(molybdopterin guanine dinucleotide)</name>
        <dbReference type="ChEBI" id="CHEBI:60539"/>
    </ligand>
</feature>
<feature type="binding site" evidence="1">
    <location>
        <position position="374"/>
    </location>
    <ligand>
        <name>Mo-bis(molybdopterin guanine dinucleotide)</name>
        <dbReference type="ChEBI" id="CHEBI:60539"/>
    </ligand>
</feature>
<feature type="binding site" evidence="1">
    <location>
        <position position="378"/>
    </location>
    <ligand>
        <name>Mo-bis(molybdopterin guanine dinucleotide)</name>
        <dbReference type="ChEBI" id="CHEBI:60539"/>
    </ligand>
</feature>
<feature type="binding site" evidence="1">
    <location>
        <position position="484"/>
    </location>
    <ligand>
        <name>Mo-bis(molybdopterin guanine dinucleotide)</name>
        <dbReference type="ChEBI" id="CHEBI:60539"/>
    </ligand>
</feature>
<feature type="binding site" evidence="1">
    <location>
        <begin position="510"/>
        <end position="511"/>
    </location>
    <ligand>
        <name>Mo-bis(molybdopterin guanine dinucleotide)</name>
        <dbReference type="ChEBI" id="CHEBI:60539"/>
    </ligand>
</feature>
<feature type="binding site" evidence="1">
    <location>
        <position position="533"/>
    </location>
    <ligand>
        <name>Mo-bis(molybdopterin guanine dinucleotide)</name>
        <dbReference type="ChEBI" id="CHEBI:60539"/>
    </ligand>
</feature>
<feature type="binding site" evidence="1">
    <location>
        <position position="560"/>
    </location>
    <ligand>
        <name>Mo-bis(molybdopterin guanine dinucleotide)</name>
        <dbReference type="ChEBI" id="CHEBI:60539"/>
    </ligand>
</feature>
<feature type="binding site" evidence="1">
    <location>
        <begin position="718"/>
        <end position="727"/>
    </location>
    <ligand>
        <name>Mo-bis(molybdopterin guanine dinucleotide)</name>
        <dbReference type="ChEBI" id="CHEBI:60539"/>
    </ligand>
</feature>
<feature type="binding site" evidence="1">
    <location>
        <position position="794"/>
    </location>
    <ligand>
        <name>substrate</name>
    </ligand>
</feature>
<feature type="binding site" evidence="1">
    <location>
        <position position="802"/>
    </location>
    <ligand>
        <name>Mo-bis(molybdopterin guanine dinucleotide)</name>
        <dbReference type="ChEBI" id="CHEBI:60539"/>
    </ligand>
</feature>
<feature type="binding site" evidence="1">
    <location>
        <position position="819"/>
    </location>
    <ligand>
        <name>Mo-bis(molybdopterin guanine dinucleotide)</name>
        <dbReference type="ChEBI" id="CHEBI:60539"/>
    </ligand>
</feature>
<sequence length="829" mass="92614">MKMTRRAFVKANAAASAAAVAGVTLPATATNLIASSDQTKITWDKAPCRFCGTGCSVLVGTQNGKVVATQGDPEAPVNKGLNCIKGYFLSKIMYGKDRLEQPLLRMKDGEFHKDGDFAPVSWDKAFDVMAEKWKAALKKNGPTGVGMFGSGQWTVMEGYAAVKLMKAGFRSNNIDPNARHCMASAVGAFMRTFGIDEPMGCYDDFEHADAFVLWGSNMAEMHPVLWTRITDRRLSHPHVKVNVLSTYYHRSFELADTGYIFEPQSDLAIANFIANYIIQNDAVNWEFVNKHTNFKQATTDIGYGLRDNDPLQKAAANPNSGKMTDISFEDYKASVAEYTVEKASEMSGVSQDDLIKLAKQYADPNIKVMSLWTMGMNQHTRGVWMNSLVYNIHLLTGKISTPGNSPFSLTGQPSACGTAREVGTFSHRLPADMVVANPKHRKIAEDIWKLPEGTIPPKPGKHAVAQDRALKDGTINAYWVMCNNNMQAGPNINTERLPGYRNPDNFIVCSDPYPTATAQASDLILPTAMWIEKEGAYGNAERRTQAWYQQVKTVGEAKSDLWQIMEFSKRFTVEEVWGEELLAKAPEYRGKTMYDVLYKNGNVDAFPLSEAQELNDDAQAQGFYVQKGLFEEYAAFGRDHGHDLAPYDTYHKVRGLRWPVVDGKETLWRFKEGSDPYAKKGSGWDFYGKPDGKALIINAPYEAPPEVPSDEYDMWLCTGRVLEHWHTGTMTRRVPELYKAVPDALCYIHPADAKARGLRRGDEVLIENKRGEVRVRVETRGRNRPPQGLVFVPFFDARILINKLILDATDPLSKQTDYKKCPVKITKVS</sequence>
<comment type="function">
    <text evidence="1">Catalytic subunit of the periplasmic nitrate reductase complex NapAB. Receives electrons from NapB and catalyzes the reduction of nitrate to nitrite.</text>
</comment>
<comment type="catalytic activity">
    <reaction evidence="1">
        <text>2 Fe(II)-[cytochrome] + nitrate + 2 H(+) = 2 Fe(III)-[cytochrome] + nitrite + H2O</text>
        <dbReference type="Rhea" id="RHEA:12909"/>
        <dbReference type="Rhea" id="RHEA-COMP:11777"/>
        <dbReference type="Rhea" id="RHEA-COMP:11778"/>
        <dbReference type="ChEBI" id="CHEBI:15377"/>
        <dbReference type="ChEBI" id="CHEBI:15378"/>
        <dbReference type="ChEBI" id="CHEBI:16301"/>
        <dbReference type="ChEBI" id="CHEBI:17632"/>
        <dbReference type="ChEBI" id="CHEBI:29033"/>
        <dbReference type="ChEBI" id="CHEBI:29034"/>
        <dbReference type="EC" id="1.9.6.1"/>
    </reaction>
</comment>
<comment type="cofactor">
    <cofactor evidence="1">
        <name>[4Fe-4S] cluster</name>
        <dbReference type="ChEBI" id="CHEBI:49883"/>
    </cofactor>
    <text evidence="1">Binds 1 [4Fe-4S] cluster.</text>
</comment>
<comment type="cofactor">
    <cofactor evidence="1">
        <name>Mo-bis(molybdopterin guanine dinucleotide)</name>
        <dbReference type="ChEBI" id="CHEBI:60539"/>
    </cofactor>
    <text evidence="1">Binds 1 molybdenum-bis(molybdopterin guanine dinucleotide) (Mo-bis-MGD) cofactor per subunit.</text>
</comment>
<comment type="subunit">
    <text evidence="1">Component of the periplasmic nitrate reductase NapAB complex composed of NapA and NapB.</text>
</comment>
<comment type="subcellular location">
    <subcellularLocation>
        <location evidence="1">Periplasm</location>
    </subcellularLocation>
</comment>
<comment type="PTM">
    <text evidence="1">Predicted to be exported by the Tat system. The position of the signal peptide cleavage has not been experimentally proven.</text>
</comment>
<comment type="similarity">
    <text evidence="1">Belongs to the prokaryotic molybdopterin-containing oxidoreductase family. NasA/NapA/NarB subfamily.</text>
</comment>
<protein>
    <recommendedName>
        <fullName evidence="1">Periplasmic nitrate reductase</fullName>
        <ecNumber evidence="1">1.9.6.1</ecNumber>
    </recommendedName>
</protein>
<keyword id="KW-0004">4Fe-4S</keyword>
<keyword id="KW-0249">Electron transport</keyword>
<keyword id="KW-0408">Iron</keyword>
<keyword id="KW-0411">Iron-sulfur</keyword>
<keyword id="KW-0479">Metal-binding</keyword>
<keyword id="KW-0500">Molybdenum</keyword>
<keyword id="KW-0534">Nitrate assimilation</keyword>
<keyword id="KW-0560">Oxidoreductase</keyword>
<keyword id="KW-0574">Periplasm</keyword>
<keyword id="KW-0732">Signal</keyword>
<keyword id="KW-0813">Transport</keyword>
<evidence type="ECO:0000255" key="1">
    <source>
        <dbReference type="HAMAP-Rule" id="MF_01630"/>
    </source>
</evidence>
<reference key="1">
    <citation type="submission" date="2009-02" db="EMBL/GenBank/DDBJ databases">
        <title>Vibrio splendidus str. LGP32 complete genome.</title>
        <authorList>
            <person name="Mazel D."/>
            <person name="Le Roux F."/>
        </authorList>
    </citation>
    <scope>NUCLEOTIDE SEQUENCE [LARGE SCALE GENOMIC DNA]</scope>
    <source>
        <strain>LGP32</strain>
    </source>
</reference>
<accession>B7VRL0</accession>
<dbReference type="EC" id="1.9.6.1" evidence="1"/>
<dbReference type="EMBL" id="FM954973">
    <property type="protein sequence ID" value="CAV26209.1"/>
    <property type="molecule type" value="Genomic_DNA"/>
</dbReference>
<dbReference type="SMR" id="B7VRL0"/>
<dbReference type="STRING" id="575788.VS_II0598"/>
<dbReference type="KEGG" id="vsp:VS_II0598"/>
<dbReference type="PATRIC" id="fig|575788.5.peg.579"/>
<dbReference type="eggNOG" id="COG0243">
    <property type="taxonomic scope" value="Bacteria"/>
</dbReference>
<dbReference type="HOGENOM" id="CLU_000422_13_4_6"/>
<dbReference type="Proteomes" id="UP000009100">
    <property type="component" value="Chromosome 2"/>
</dbReference>
<dbReference type="GO" id="GO:0016020">
    <property type="term" value="C:membrane"/>
    <property type="evidence" value="ECO:0007669"/>
    <property type="project" value="TreeGrafter"/>
</dbReference>
<dbReference type="GO" id="GO:0009325">
    <property type="term" value="C:nitrate reductase complex"/>
    <property type="evidence" value="ECO:0007669"/>
    <property type="project" value="TreeGrafter"/>
</dbReference>
<dbReference type="GO" id="GO:0042597">
    <property type="term" value="C:periplasmic space"/>
    <property type="evidence" value="ECO:0007669"/>
    <property type="project" value="UniProtKB-SubCell"/>
</dbReference>
<dbReference type="GO" id="GO:0051539">
    <property type="term" value="F:4 iron, 4 sulfur cluster binding"/>
    <property type="evidence" value="ECO:0007669"/>
    <property type="project" value="UniProtKB-KW"/>
</dbReference>
<dbReference type="GO" id="GO:0009055">
    <property type="term" value="F:electron transfer activity"/>
    <property type="evidence" value="ECO:0007669"/>
    <property type="project" value="UniProtKB-UniRule"/>
</dbReference>
<dbReference type="GO" id="GO:0005506">
    <property type="term" value="F:iron ion binding"/>
    <property type="evidence" value="ECO:0007669"/>
    <property type="project" value="UniProtKB-UniRule"/>
</dbReference>
<dbReference type="GO" id="GO:0030151">
    <property type="term" value="F:molybdenum ion binding"/>
    <property type="evidence" value="ECO:0007669"/>
    <property type="project" value="InterPro"/>
</dbReference>
<dbReference type="GO" id="GO:0043546">
    <property type="term" value="F:molybdopterin cofactor binding"/>
    <property type="evidence" value="ECO:0007669"/>
    <property type="project" value="InterPro"/>
</dbReference>
<dbReference type="GO" id="GO:0050140">
    <property type="term" value="F:nitrate reductase (cytochrome) activity"/>
    <property type="evidence" value="ECO:0007669"/>
    <property type="project" value="UniProtKB-EC"/>
</dbReference>
<dbReference type="GO" id="GO:0045333">
    <property type="term" value="P:cellular respiration"/>
    <property type="evidence" value="ECO:0007669"/>
    <property type="project" value="UniProtKB-ARBA"/>
</dbReference>
<dbReference type="GO" id="GO:0006777">
    <property type="term" value="P:Mo-molybdopterin cofactor biosynthetic process"/>
    <property type="evidence" value="ECO:0007669"/>
    <property type="project" value="UniProtKB-UniRule"/>
</dbReference>
<dbReference type="GO" id="GO:0042128">
    <property type="term" value="P:nitrate assimilation"/>
    <property type="evidence" value="ECO:0007669"/>
    <property type="project" value="UniProtKB-UniRule"/>
</dbReference>
<dbReference type="CDD" id="cd02791">
    <property type="entry name" value="MopB_CT_Nitrate-R-NapA-like"/>
    <property type="match status" value="1"/>
</dbReference>
<dbReference type="CDD" id="cd02754">
    <property type="entry name" value="MopB_Nitrate-R-NapA-like"/>
    <property type="match status" value="1"/>
</dbReference>
<dbReference type="FunFam" id="2.40.40.20:FF:000005">
    <property type="entry name" value="Periplasmic nitrate reductase"/>
    <property type="match status" value="1"/>
</dbReference>
<dbReference type="Gene3D" id="2.40.40.20">
    <property type="match status" value="1"/>
</dbReference>
<dbReference type="Gene3D" id="3.30.200.210">
    <property type="match status" value="1"/>
</dbReference>
<dbReference type="Gene3D" id="3.40.50.740">
    <property type="match status" value="1"/>
</dbReference>
<dbReference type="Gene3D" id="3.40.228.10">
    <property type="entry name" value="Dimethylsulfoxide Reductase, domain 2"/>
    <property type="match status" value="1"/>
</dbReference>
<dbReference type="HAMAP" id="MF_01630">
    <property type="entry name" value="Nitrate_reduct_NapA"/>
    <property type="match status" value="1"/>
</dbReference>
<dbReference type="InterPro" id="IPR009010">
    <property type="entry name" value="Asp_de-COase-like_dom_sf"/>
</dbReference>
<dbReference type="InterPro" id="IPR041957">
    <property type="entry name" value="CT_Nitrate-R-NapA-like"/>
</dbReference>
<dbReference type="InterPro" id="IPR006657">
    <property type="entry name" value="MoPterin_dinucl-bd_dom"/>
</dbReference>
<dbReference type="InterPro" id="IPR006656">
    <property type="entry name" value="Mopterin_OxRdtase"/>
</dbReference>
<dbReference type="InterPro" id="IPR006963">
    <property type="entry name" value="Mopterin_OxRdtase_4Fe-4S_dom"/>
</dbReference>
<dbReference type="InterPro" id="IPR027467">
    <property type="entry name" value="MopterinOxRdtase_cofactor_BS"/>
</dbReference>
<dbReference type="InterPro" id="IPR010051">
    <property type="entry name" value="Periplasm_NO3_reductase_lsu"/>
</dbReference>
<dbReference type="InterPro" id="IPR050123">
    <property type="entry name" value="Prok_molybdopt-oxidoreductase"/>
</dbReference>
<dbReference type="InterPro" id="IPR006311">
    <property type="entry name" value="TAT_signal"/>
</dbReference>
<dbReference type="NCBIfam" id="TIGR01706">
    <property type="entry name" value="NAPA"/>
    <property type="match status" value="1"/>
</dbReference>
<dbReference type="NCBIfam" id="NF010055">
    <property type="entry name" value="PRK13532.1"/>
    <property type="match status" value="1"/>
</dbReference>
<dbReference type="PANTHER" id="PTHR43105:SF11">
    <property type="entry name" value="PERIPLASMIC NITRATE REDUCTASE"/>
    <property type="match status" value="1"/>
</dbReference>
<dbReference type="PANTHER" id="PTHR43105">
    <property type="entry name" value="RESPIRATORY NITRATE REDUCTASE"/>
    <property type="match status" value="1"/>
</dbReference>
<dbReference type="Pfam" id="PF04879">
    <property type="entry name" value="Molybdop_Fe4S4"/>
    <property type="match status" value="1"/>
</dbReference>
<dbReference type="Pfam" id="PF00384">
    <property type="entry name" value="Molybdopterin"/>
    <property type="match status" value="1"/>
</dbReference>
<dbReference type="Pfam" id="PF01568">
    <property type="entry name" value="Molydop_binding"/>
    <property type="match status" value="1"/>
</dbReference>
<dbReference type="SMART" id="SM00926">
    <property type="entry name" value="Molybdop_Fe4S4"/>
    <property type="match status" value="1"/>
</dbReference>
<dbReference type="SUPFAM" id="SSF50692">
    <property type="entry name" value="ADC-like"/>
    <property type="match status" value="1"/>
</dbReference>
<dbReference type="SUPFAM" id="SSF53706">
    <property type="entry name" value="Formate dehydrogenase/DMSO reductase, domains 1-3"/>
    <property type="match status" value="1"/>
</dbReference>
<dbReference type="PROSITE" id="PS51669">
    <property type="entry name" value="4FE4S_MOW_BIS_MGD"/>
    <property type="match status" value="1"/>
</dbReference>
<dbReference type="PROSITE" id="PS00551">
    <property type="entry name" value="MOLYBDOPTERIN_PROK_1"/>
    <property type="match status" value="1"/>
</dbReference>
<dbReference type="PROSITE" id="PS51318">
    <property type="entry name" value="TAT"/>
    <property type="match status" value="1"/>
</dbReference>